<accession>Q642T7</accession>
<reference key="1">
    <citation type="submission" date="2004-08" db="EMBL/GenBank/DDBJ databases">
        <authorList>
            <consortium name="NIH - Xenopus Gene Collection (XGC) project"/>
        </authorList>
    </citation>
    <scope>NUCLEOTIDE SEQUENCE [LARGE SCALE MRNA]</scope>
    <source>
        <tissue>Embryo</tissue>
    </source>
</reference>
<organism>
    <name type="scientific">Xenopus tropicalis</name>
    <name type="common">Western clawed frog</name>
    <name type="synonym">Silurana tropicalis</name>
    <dbReference type="NCBI Taxonomy" id="8364"/>
    <lineage>
        <taxon>Eukaryota</taxon>
        <taxon>Metazoa</taxon>
        <taxon>Chordata</taxon>
        <taxon>Craniata</taxon>
        <taxon>Vertebrata</taxon>
        <taxon>Euteleostomi</taxon>
        <taxon>Amphibia</taxon>
        <taxon>Batrachia</taxon>
        <taxon>Anura</taxon>
        <taxon>Pipoidea</taxon>
        <taxon>Pipidae</taxon>
        <taxon>Xenopodinae</taxon>
        <taxon>Xenopus</taxon>
        <taxon>Silurana</taxon>
    </lineage>
</organism>
<keyword id="KW-0217">Developmental protein</keyword>
<keyword id="KW-0539">Nucleus</keyword>
<keyword id="KW-0597">Phosphoprotein</keyword>
<keyword id="KW-1185">Reference proteome</keyword>
<proteinExistence type="evidence at transcript level"/>
<feature type="chain" id="PRO_0000254154" description="U3 small nucleolar RNA-associated protein 25 homolog">
    <location>
        <begin position="1"/>
        <end position="765"/>
    </location>
</feature>
<feature type="region of interest" description="Promotes p53/TP53 degradation" evidence="2">
    <location>
        <begin position="1"/>
        <end position="198"/>
    </location>
</feature>
<feature type="region of interest" description="Disordered" evidence="3">
    <location>
        <begin position="1"/>
        <end position="170"/>
    </location>
</feature>
<feature type="region of interest" description="Promotes p53/TP53 degradation" evidence="2">
    <location>
        <begin position="581"/>
        <end position="643"/>
    </location>
</feature>
<feature type="region of interest" description="Represses p53/TP53 degradation" evidence="2">
    <location>
        <begin position="644"/>
        <end position="705"/>
    </location>
</feature>
<feature type="compositionally biased region" description="Acidic residues" evidence="3">
    <location>
        <begin position="84"/>
        <end position="127"/>
    </location>
</feature>
<feature type="compositionally biased region" description="Basic and acidic residues" evidence="3">
    <location>
        <begin position="128"/>
        <end position="146"/>
    </location>
</feature>
<feature type="compositionally biased region" description="Acidic residues" evidence="3">
    <location>
        <begin position="147"/>
        <end position="163"/>
    </location>
</feature>
<feature type="modified residue" description="Phosphoserine" evidence="2">
    <location>
        <position position="52"/>
    </location>
</feature>
<feature type="modified residue" description="Phosphoserine" evidence="2">
    <location>
        <position position="61"/>
    </location>
</feature>
<feature type="modified residue" description="Phosphoserine" evidence="2">
    <location>
        <position position="65"/>
    </location>
</feature>
<evidence type="ECO:0000250" key="1">
    <source>
        <dbReference type="UniProtKB" id="Q68CQ4"/>
    </source>
</evidence>
<evidence type="ECO:0000250" key="2">
    <source>
        <dbReference type="UniProtKB" id="Q6PEH4"/>
    </source>
</evidence>
<evidence type="ECO:0000256" key="3">
    <source>
        <dbReference type="SAM" id="MobiDB-lite"/>
    </source>
</evidence>
<evidence type="ECO:0000305" key="4"/>
<dbReference type="EMBL" id="BC080917">
    <property type="protein sequence ID" value="AAH80917.1"/>
    <property type="molecule type" value="mRNA"/>
</dbReference>
<dbReference type="RefSeq" id="NP_001008035.1">
    <property type="nucleotide sequence ID" value="NM_001008034.1"/>
</dbReference>
<dbReference type="FunCoup" id="Q642T7">
    <property type="interactions" value="3339"/>
</dbReference>
<dbReference type="STRING" id="8364.ENSXETP00000022314"/>
<dbReference type="PaxDb" id="8364-ENSXETP00000000454"/>
<dbReference type="GeneID" id="493397"/>
<dbReference type="KEGG" id="xtr:493397"/>
<dbReference type="AGR" id="Xenbase:XB-GENE-1002187"/>
<dbReference type="CTD" id="27042"/>
<dbReference type="Xenbase" id="XB-GENE-1002187">
    <property type="gene designation" value="utp25"/>
</dbReference>
<dbReference type="InParanoid" id="Q642T7"/>
<dbReference type="OMA" id="QDRGDTF"/>
<dbReference type="OrthoDB" id="10264378at2759"/>
<dbReference type="Proteomes" id="UP000008143">
    <property type="component" value="Chromosome 5"/>
</dbReference>
<dbReference type="Bgee" id="ENSXETG00000000216">
    <property type="expression patterns" value="Expressed in gastrula and 12 other cell types or tissues"/>
</dbReference>
<dbReference type="GO" id="GO:0005730">
    <property type="term" value="C:nucleolus"/>
    <property type="evidence" value="ECO:0000250"/>
    <property type="project" value="UniProtKB"/>
</dbReference>
<dbReference type="GO" id="GO:0034511">
    <property type="term" value="F:U3 snoRNA binding"/>
    <property type="evidence" value="ECO:0007669"/>
    <property type="project" value="InterPro"/>
</dbReference>
<dbReference type="GO" id="GO:0048568">
    <property type="term" value="P:embryonic organ development"/>
    <property type="evidence" value="ECO:0000250"/>
    <property type="project" value="UniProtKB"/>
</dbReference>
<dbReference type="GO" id="GO:0030163">
    <property type="term" value="P:protein catabolic process"/>
    <property type="evidence" value="ECO:0000250"/>
    <property type="project" value="UniProtKB"/>
</dbReference>
<dbReference type="GO" id="GO:0031648">
    <property type="term" value="P:protein destabilization"/>
    <property type="evidence" value="ECO:0000250"/>
    <property type="project" value="UniProtKB"/>
</dbReference>
<dbReference type="GO" id="GO:1902570">
    <property type="term" value="P:protein localization to nucleolus"/>
    <property type="evidence" value="ECO:0000250"/>
    <property type="project" value="UniProtKB"/>
</dbReference>
<dbReference type="GO" id="GO:0006364">
    <property type="term" value="P:rRNA processing"/>
    <property type="evidence" value="ECO:0007669"/>
    <property type="project" value="InterPro"/>
</dbReference>
<dbReference type="FunFam" id="3.40.50.300:FF:000962">
    <property type="entry name" value="digestive organ expansion factor homolog"/>
    <property type="match status" value="1"/>
</dbReference>
<dbReference type="Gene3D" id="3.40.50.300">
    <property type="entry name" value="P-loop containing nucleotide triphosphate hydrolases"/>
    <property type="match status" value="1"/>
</dbReference>
<dbReference type="InterPro" id="IPR027417">
    <property type="entry name" value="P-loop_NTPase"/>
</dbReference>
<dbReference type="InterPro" id="IPR010678">
    <property type="entry name" value="UTP25"/>
</dbReference>
<dbReference type="InterPro" id="IPR053939">
    <property type="entry name" value="UTP25_C"/>
</dbReference>
<dbReference type="InterPro" id="IPR053940">
    <property type="entry name" value="UTP25_NTPase-like"/>
</dbReference>
<dbReference type="PANTHER" id="PTHR12933">
    <property type="entry name" value="ORF PROTEIN-RELATED"/>
    <property type="match status" value="1"/>
</dbReference>
<dbReference type="PANTHER" id="PTHR12933:SF0">
    <property type="entry name" value="U3 SMALL NUCLEOLAR RNA-ASSOCIATED PROTEIN 25 HOMOLOG"/>
    <property type="match status" value="1"/>
</dbReference>
<dbReference type="Pfam" id="PF06862">
    <property type="entry name" value="Utp25_C"/>
    <property type="match status" value="1"/>
</dbReference>
<dbReference type="Pfam" id="PF22916">
    <property type="entry name" value="UTP25_NTPase-like"/>
    <property type="match status" value="1"/>
</dbReference>
<dbReference type="SUPFAM" id="SSF52540">
    <property type="entry name" value="P-loop containing nucleoside triphosphate hydrolases"/>
    <property type="match status" value="1"/>
</dbReference>
<name>UTP25_XENTR</name>
<comment type="function">
    <text evidence="1 2">Component of the ribosomal small subunit processome for the biogenesis of ribosomes, functions in pre-ribosomal RNA (pre-rRNA) processing (By similarity). Essential for embryonic development in part through the regulation of p53 pathway. Controls the expansion growth of digestive organs and liver (By similarity). Also involved in the sympathetic neuronal development (By similarity). Mediates, with CAPN3, the proteasome-independent degradation of p53/TP53 (By similarity).</text>
</comment>
<comment type="subunit">
    <text evidence="1">Interacts with CAPN3; the interaction is required for CAPN3 translocation to the nucleolus.</text>
</comment>
<comment type="subcellular location">
    <subcellularLocation>
        <location evidence="1">Nucleus</location>
        <location evidence="1">Nucleolus</location>
    </subcellularLocation>
</comment>
<comment type="PTM">
    <text evidence="1">Phosphorylated. Phosphorylation is required to promote p53/TP53 degradation in the nucleolus which promotes cell cycle progression and liver development.</text>
</comment>
<comment type="similarity">
    <text evidence="4">Belongs to the UTP25 family.</text>
</comment>
<gene>
    <name type="primary">utp25</name>
    <name type="synonym">def</name>
    <name type="synonym">diexf</name>
</gene>
<protein>
    <recommendedName>
        <fullName>U3 small nucleolar RNA-associated protein 25 homolog</fullName>
    </recommendedName>
    <alternativeName>
        <fullName>Digestive organ expansion factor homolog</fullName>
    </alternativeName>
    <alternativeName>
        <fullName>UTP25 small subunit processor component</fullName>
    </alternativeName>
</protein>
<sequence>MGKRRKPRREEAGSALSKKQKKHLKEFGEQHPFYDAVSKKQETTQVVQLPESSEDESRSESEAESDPEPVNMYHKLLATLNTVSDEEEEESDDEEEEALEEAEEEDEAEEVGEESEAEDEDNEDESDGEGHGQMDELPVEAEKAGDNEEEERAGDPAAEEAGEFTDAKHESKFSLETNFMDEDNEDSKDESVPCPTVATEDPFVQHVGRELEEQDISKIGTNPKKASLKWPALGQLGVSSSLPQLQPLKVEKETDLQKLYLHKPLFSTWPKVNSPFLSVDKEQNFTPLQRELFSIMNSYRDLFFPARSPTAQGEEIRHVYCLHALNHVLKANAQVLNNNSQKRDQKPGLDEEDLRDQGLTRPKVLIVVPFRESALRIVQILISLMEVGGRKVDVSNKKRFKEEFGSEPEDRPPNLKRPEDYEAVFAGNIDDHFRIGVAILQKSMRLYSPFYSSDIIIASPVGLRTIIGSEGEKKRDFDFLSSIEVLILDQADLYLMQNWEHVLHLMAHLNLQPTDSHGVDFSRVRMWNLSNWAKYYRQTLLFSSLQEPQINSIFNKHCFNYCGQVAVRNMPVTGSISHVVVQLPHVFQRLEADSLLTVIDARFEFFTSKILPQYRDAIMSHTLIYIPSYFDYVRLRNYFKKEELNFTHICEYTNRSGVSRARQFFLKGERQFLLVTERFHFYKRYTLKGIRNLIFYELPTYPHFYSEVCNMMKAWHRGEEATWTCTVLYSKYDAQRLAAVVGAERAAQMLQSKKNVHLFVTGENG</sequence>